<organism>
    <name type="scientific">Schizosaccharomyces pombe (strain 972 / ATCC 24843)</name>
    <name type="common">Fission yeast</name>
    <dbReference type="NCBI Taxonomy" id="284812"/>
    <lineage>
        <taxon>Eukaryota</taxon>
        <taxon>Fungi</taxon>
        <taxon>Dikarya</taxon>
        <taxon>Ascomycota</taxon>
        <taxon>Taphrinomycotina</taxon>
        <taxon>Schizosaccharomycetes</taxon>
        <taxon>Schizosaccharomycetales</taxon>
        <taxon>Schizosaccharomycetaceae</taxon>
        <taxon>Schizosaccharomyces</taxon>
    </lineage>
</organism>
<evidence type="ECO:0000269" key="1">
    <source>
    </source>
</evidence>
<evidence type="ECO:0000269" key="2">
    <source>
    </source>
</evidence>
<evidence type="ECO:0000269" key="3">
    <source>
    </source>
</evidence>
<evidence type="ECO:0000269" key="4">
    <source>
    </source>
</evidence>
<evidence type="ECO:0000303" key="5">
    <source>
    </source>
</evidence>
<evidence type="ECO:0000305" key="6"/>
<evidence type="ECO:0000305" key="7">
    <source>
    </source>
</evidence>
<evidence type="ECO:0007744" key="8">
    <source>
        <dbReference type="PDB" id="4B21"/>
    </source>
</evidence>
<evidence type="ECO:0007744" key="9">
    <source>
        <dbReference type="PDB" id="4B22"/>
    </source>
</evidence>
<evidence type="ECO:0007744" key="10">
    <source>
        <dbReference type="PDB" id="4B23"/>
    </source>
</evidence>
<evidence type="ECO:0007744" key="11">
    <source>
        <dbReference type="PDB" id="4B24"/>
    </source>
</evidence>
<evidence type="ECO:0007744" key="12">
    <source>
        <dbReference type="PDB" id="4HSB"/>
    </source>
</evidence>
<evidence type="ECO:0007829" key="13">
    <source>
        <dbReference type="PDB" id="4B21"/>
    </source>
</evidence>
<protein>
    <recommendedName>
        <fullName evidence="7">Alkylbase DNA glycosidase-like protein mag2</fullName>
    </recommendedName>
</protein>
<reference key="1">
    <citation type="journal article" date="2002" name="Nature">
        <title>The genome sequence of Schizosaccharomyces pombe.</title>
        <authorList>
            <person name="Wood V."/>
            <person name="Gwilliam R."/>
            <person name="Rajandream M.A."/>
            <person name="Lyne M.H."/>
            <person name="Lyne R."/>
            <person name="Stewart A."/>
            <person name="Sgouros J.G."/>
            <person name="Peat N."/>
            <person name="Hayles J."/>
            <person name="Baker S.G."/>
            <person name="Basham D."/>
            <person name="Bowman S."/>
            <person name="Brooks K."/>
            <person name="Brown D."/>
            <person name="Brown S."/>
            <person name="Chillingworth T."/>
            <person name="Churcher C.M."/>
            <person name="Collins M."/>
            <person name="Connor R."/>
            <person name="Cronin A."/>
            <person name="Davis P."/>
            <person name="Feltwell T."/>
            <person name="Fraser A."/>
            <person name="Gentles S."/>
            <person name="Goble A."/>
            <person name="Hamlin N."/>
            <person name="Harris D.E."/>
            <person name="Hidalgo J."/>
            <person name="Hodgson G."/>
            <person name="Holroyd S."/>
            <person name="Hornsby T."/>
            <person name="Howarth S."/>
            <person name="Huckle E.J."/>
            <person name="Hunt S."/>
            <person name="Jagels K."/>
            <person name="James K.D."/>
            <person name="Jones L."/>
            <person name="Jones M."/>
            <person name="Leather S."/>
            <person name="McDonald S."/>
            <person name="McLean J."/>
            <person name="Mooney P."/>
            <person name="Moule S."/>
            <person name="Mungall K.L."/>
            <person name="Murphy L.D."/>
            <person name="Niblett D."/>
            <person name="Odell C."/>
            <person name="Oliver K."/>
            <person name="O'Neil S."/>
            <person name="Pearson D."/>
            <person name="Quail M.A."/>
            <person name="Rabbinowitsch E."/>
            <person name="Rutherford K.M."/>
            <person name="Rutter S."/>
            <person name="Saunders D."/>
            <person name="Seeger K."/>
            <person name="Sharp S."/>
            <person name="Skelton J."/>
            <person name="Simmonds M.N."/>
            <person name="Squares R."/>
            <person name="Squares S."/>
            <person name="Stevens K."/>
            <person name="Taylor K."/>
            <person name="Taylor R.G."/>
            <person name="Tivey A."/>
            <person name="Walsh S.V."/>
            <person name="Warren T."/>
            <person name="Whitehead S."/>
            <person name="Woodward J.R."/>
            <person name="Volckaert G."/>
            <person name="Aert R."/>
            <person name="Robben J."/>
            <person name="Grymonprez B."/>
            <person name="Weltjens I."/>
            <person name="Vanstreels E."/>
            <person name="Rieger M."/>
            <person name="Schaefer M."/>
            <person name="Mueller-Auer S."/>
            <person name="Gabel C."/>
            <person name="Fuchs M."/>
            <person name="Duesterhoeft A."/>
            <person name="Fritzc C."/>
            <person name="Holzer E."/>
            <person name="Moestl D."/>
            <person name="Hilbert H."/>
            <person name="Borzym K."/>
            <person name="Langer I."/>
            <person name="Beck A."/>
            <person name="Lehrach H."/>
            <person name="Reinhardt R."/>
            <person name="Pohl T.M."/>
            <person name="Eger P."/>
            <person name="Zimmermann W."/>
            <person name="Wedler H."/>
            <person name="Wambutt R."/>
            <person name="Purnelle B."/>
            <person name="Goffeau A."/>
            <person name="Cadieu E."/>
            <person name="Dreano S."/>
            <person name="Gloux S."/>
            <person name="Lelaure V."/>
            <person name="Mottier S."/>
            <person name="Galibert F."/>
            <person name="Aves S.J."/>
            <person name="Xiang Z."/>
            <person name="Hunt C."/>
            <person name="Moore K."/>
            <person name="Hurst S.M."/>
            <person name="Lucas M."/>
            <person name="Rochet M."/>
            <person name="Gaillardin C."/>
            <person name="Tallada V.A."/>
            <person name="Garzon A."/>
            <person name="Thode G."/>
            <person name="Daga R.R."/>
            <person name="Cruzado L."/>
            <person name="Jimenez J."/>
            <person name="Sanchez M."/>
            <person name="del Rey F."/>
            <person name="Benito J."/>
            <person name="Dominguez A."/>
            <person name="Revuelta J.L."/>
            <person name="Moreno S."/>
            <person name="Armstrong J."/>
            <person name="Forsburg S.L."/>
            <person name="Cerutti L."/>
            <person name="Lowe T."/>
            <person name="McCombie W.R."/>
            <person name="Paulsen I."/>
            <person name="Potashkin J."/>
            <person name="Shpakovski G.V."/>
            <person name="Ussery D."/>
            <person name="Barrell B.G."/>
            <person name="Nurse P."/>
        </authorList>
    </citation>
    <scope>NUCLEOTIDE SEQUENCE [LARGE SCALE GENOMIC DNA]</scope>
    <source>
        <strain>972 / ATCC 24843</strain>
    </source>
</reference>
<reference key="2">
    <citation type="journal article" date="2006" name="Nat. Biotechnol.">
        <title>ORFeome cloning and global analysis of protein localization in the fission yeast Schizosaccharomyces pombe.</title>
        <authorList>
            <person name="Matsuyama A."/>
            <person name="Arai R."/>
            <person name="Yashiroda Y."/>
            <person name="Shirai A."/>
            <person name="Kamata A."/>
            <person name="Sekido S."/>
            <person name="Kobayashi Y."/>
            <person name="Hashimoto A."/>
            <person name="Hamamoto M."/>
            <person name="Hiraoka Y."/>
            <person name="Horinouchi S."/>
            <person name="Yoshida M."/>
        </authorList>
    </citation>
    <scope>SUBCELLULAR LOCATION [LARGE SCALE ANALYSIS]</scope>
</reference>
<reference key="3">
    <citation type="journal article" date="2007" name="Genes Genet. Syst.">
        <title>Involvement of 3-methyladenine DNA glycosylases Mag1p and Mag2p in base excision repair of methyl methanesulfonate-damaged DNA in the fission yeast Schizosaccharomyces pombe.</title>
        <authorList>
            <person name="Kanamitsu K."/>
            <person name="Tanihigashi H."/>
            <person name="Tanita Y."/>
            <person name="Inatani S."/>
            <person name="Ikeda S."/>
        </authorList>
    </citation>
    <scope>FUNCTION</scope>
</reference>
<reference evidence="12" key="4">
    <citation type="journal article" date="2013" name="DNA Repair">
        <title>Non-productive DNA damage binding by DNA glycosylase-like protein Mag2 from Schizosaccharomyces pombe.</title>
        <authorList>
            <person name="Adhikary S."/>
            <person name="Cato M.C."/>
            <person name="McGary K.L."/>
            <person name="Rokas A."/>
            <person name="Eichman B.F."/>
        </authorList>
    </citation>
    <scope>X-RAY CRYSTALLOGRAPHY (1.90 ANGSTROMS) IN COMPLEX WITH DNA</scope>
    <scope>DNA-BINDING</scope>
    <scope>FUNCTION</scope>
    <scope>MUTAGENESIS OF ASP-56</scope>
</reference>
<reference evidence="8 9 10 11" key="5">
    <citation type="journal article" date="2013" name="Structure">
        <title>Sculpting of DNA at abasic sites by DNA glycosylase homolog mag2.</title>
        <authorList>
            <person name="Dalhus B."/>
            <person name="Nilsen L."/>
            <person name="Korvald H."/>
            <person name="Huffman J."/>
            <person name="Forstrom R.J."/>
            <person name="McMurray C.T."/>
            <person name="Alseth I."/>
            <person name="Tainer J.A."/>
            <person name="Bjoras M."/>
        </authorList>
    </citation>
    <scope>X-RAY CRYSTALLOGRAPHY (1.45 ANGSTROMS) IN COMPLEX WITH DNA</scope>
    <scope>INDUCTION</scope>
    <scope>SUBCELLULAR LOCATION</scope>
    <scope>DNA-BINDING</scope>
    <scope>FUNCTION</scope>
    <scope>MUTAGENESIS OF LYS-53</scope>
</reference>
<name>MAG2_SCHPO</name>
<feature type="chain" id="PRO_0000194882" description="Alkylbase DNA glycosidase-like protein mag2">
    <location>
        <begin position="1"/>
        <end position="213"/>
    </location>
</feature>
<feature type="binding site" evidence="3 4">
    <location>
        <position position="53"/>
    </location>
    <ligand>
        <name>DNA</name>
        <dbReference type="ChEBI" id="CHEBI:16991"/>
        <note>abasic DNA</note>
    </ligand>
</feature>
<feature type="binding site" evidence="4">
    <location>
        <position position="54"/>
    </location>
    <ligand>
        <name>DNA</name>
        <dbReference type="ChEBI" id="CHEBI:16991"/>
        <note>abasic DNA</note>
    </ligand>
</feature>
<feature type="binding site" evidence="4">
    <location>
        <position position="61"/>
    </location>
    <ligand>
        <name>DNA</name>
        <dbReference type="ChEBI" id="CHEBI:16991"/>
        <note>abasic DNA</note>
    </ligand>
</feature>
<feature type="binding site" evidence="3 4">
    <location>
        <position position="91"/>
    </location>
    <ligand>
        <name>DNA</name>
        <dbReference type="ChEBI" id="CHEBI:16991"/>
        <note>abasic DNA</note>
    </ligand>
</feature>
<feature type="binding site" evidence="4">
    <location>
        <position position="94"/>
    </location>
    <ligand>
        <name>DNA</name>
        <dbReference type="ChEBI" id="CHEBI:16991"/>
        <note>abasic DNA</note>
    </ligand>
</feature>
<feature type="binding site" evidence="4">
    <location>
        <position position="96"/>
    </location>
    <ligand>
        <name>DNA</name>
        <dbReference type="ChEBI" id="CHEBI:16991"/>
        <note>abasic DNA</note>
    </ligand>
</feature>
<feature type="binding site" evidence="3 4">
    <location>
        <position position="97"/>
    </location>
    <ligand>
        <name>DNA</name>
        <dbReference type="ChEBI" id="CHEBI:16991"/>
        <note>abasic DNA</note>
    </ligand>
</feature>
<feature type="binding site" evidence="4">
    <location>
        <position position="99"/>
    </location>
    <ligand>
        <name>DNA</name>
        <dbReference type="ChEBI" id="CHEBI:16991"/>
        <note>abasic DNA</note>
    </ligand>
</feature>
<feature type="binding site" evidence="4">
    <location>
        <position position="102"/>
    </location>
    <ligand>
        <name>DNA</name>
        <dbReference type="ChEBI" id="CHEBI:16991"/>
        <note>abasic DNA</note>
    </ligand>
</feature>
<feature type="binding site" evidence="3 4">
    <location>
        <position position="137"/>
    </location>
    <ligand>
        <name>DNA</name>
        <dbReference type="ChEBI" id="CHEBI:16991"/>
        <note>abasic DNA</note>
    </ligand>
</feature>
<feature type="binding site" evidence="3 4">
    <location>
        <position position="138"/>
    </location>
    <ligand>
        <name>DNA</name>
        <dbReference type="ChEBI" id="CHEBI:16991"/>
        <note>abasic DNA</note>
    </ligand>
</feature>
<feature type="binding site" evidence="3 4">
    <location>
        <position position="140"/>
    </location>
    <ligand>
        <name>DNA</name>
        <dbReference type="ChEBI" id="CHEBI:16991"/>
        <note>abasic DNA</note>
    </ligand>
</feature>
<feature type="binding site" evidence="3 4">
    <location>
        <position position="143"/>
    </location>
    <ligand>
        <name>DNA</name>
        <dbReference type="ChEBI" id="CHEBI:16991"/>
        <note>abasic DNA</note>
    </ligand>
</feature>
<feature type="binding site" evidence="3 4">
    <location>
        <position position="163"/>
    </location>
    <ligand>
        <name>DNA</name>
        <dbReference type="ChEBI" id="CHEBI:16991"/>
        <note>abasic DNA</note>
    </ligand>
</feature>
<feature type="binding site" evidence="3">
    <location>
        <position position="164"/>
    </location>
    <ligand>
        <name>DNA</name>
        <dbReference type="ChEBI" id="CHEBI:16991"/>
        <note>abasic DNA</note>
    </ligand>
</feature>
<feature type="mutagenesis site" description="Looses the ability to bind abasic DNA." evidence="3">
    <original>K</original>
    <variation>G</variation>
    <location>
        <position position="53"/>
    </location>
</feature>
<feature type="mutagenesis site" description="Endows DNA glycosylase activity." evidence="4">
    <original>D</original>
    <variation>S</variation>
    <location>
        <position position="56"/>
    </location>
</feature>
<feature type="helix" evidence="13">
    <location>
        <begin position="3"/>
        <end position="14"/>
    </location>
</feature>
<feature type="turn" evidence="13">
    <location>
        <begin position="15"/>
        <end position="17"/>
    </location>
</feature>
<feature type="helix" evidence="13">
    <location>
        <begin position="19"/>
        <end position="28"/>
    </location>
</feature>
<feature type="helix" evidence="13">
    <location>
        <begin position="41"/>
        <end position="50"/>
    </location>
</feature>
<feature type="turn" evidence="13">
    <location>
        <begin position="51"/>
        <end position="53"/>
    </location>
</feature>
<feature type="helix" evidence="13">
    <location>
        <begin position="56"/>
        <end position="70"/>
    </location>
</feature>
<feature type="strand" evidence="13">
    <location>
        <begin position="72"/>
        <end position="75"/>
    </location>
</feature>
<feature type="helix" evidence="13">
    <location>
        <begin position="79"/>
        <end position="83"/>
    </location>
</feature>
<feature type="helix" evidence="13">
    <location>
        <begin position="87"/>
        <end position="91"/>
    </location>
</feature>
<feature type="turn" evidence="13">
    <location>
        <begin position="92"/>
        <end position="94"/>
    </location>
</feature>
<feature type="helix" evidence="13">
    <location>
        <begin position="97"/>
        <end position="111"/>
    </location>
</feature>
<feature type="helix" evidence="13">
    <location>
        <begin position="118"/>
        <end position="123"/>
    </location>
</feature>
<feature type="helix" evidence="13">
    <location>
        <begin position="126"/>
        <end position="133"/>
    </location>
</feature>
<feature type="helix" evidence="13">
    <location>
        <begin position="141"/>
        <end position="150"/>
    </location>
</feature>
<feature type="helix" evidence="13">
    <location>
        <begin position="163"/>
        <end position="172"/>
    </location>
</feature>
<feature type="helix" evidence="13">
    <location>
        <begin position="181"/>
        <end position="187"/>
    </location>
</feature>
<feature type="helix" evidence="13">
    <location>
        <begin position="189"/>
        <end position="191"/>
    </location>
</feature>
<feature type="helix" evidence="13">
    <location>
        <begin position="195"/>
        <end position="203"/>
    </location>
</feature>
<feature type="helix" evidence="13">
    <location>
        <begin position="204"/>
        <end position="207"/>
    </location>
</feature>
<accession>O94468</accession>
<proteinExistence type="evidence at protein level"/>
<comment type="function">
    <text evidence="2 3 4">Alkylbase DNA glycosidase-like protein that shows no DNA glycosylase activity for alkylated bases (PubMed:23245849, PubMed:23273506). The molecular role of mag2 appears to be abasic (AP) site recognition and protection, while possibly facilitating damage signaling by structurally sculpting the DNA substrate (PubMed:18270439, PubMed:23245849). Stimulates AP site binding to mismatch repair protein mutS (PubMed:23245849).</text>
</comment>
<comment type="subcellular location">
    <subcellularLocation>
        <location evidence="1 3">Nucleus</location>
    </subcellularLocation>
</comment>
<comment type="induction">
    <text evidence="3">Transcription is strongly induced following exposure to the alkylating agent methyl methanesulfonate (MMS) and oxidizing H(2)O(2).</text>
</comment>
<comment type="similarity">
    <text evidence="6">Belongs to the alkylbase DNA glycosidase AlkA family.</text>
</comment>
<comment type="caution">
    <text evidence="2 3 4">As a homolog of the DNA glycosidase mag1, has been identified to be an alkylbase DNA glycosidase (PubMed:18270439). However, further studies revealed that it did not have any DNA glycosylase activity for alkylated bases due to the loss of the active site 'Ser-56', and was rather involved in structural sculpting DNA to facilitate damage signaling (PubMed:23245849, PubMed:23273506).</text>
</comment>
<sequence>MSKDSDYKRAEKHLSSIDNKWSSLVKKVGPCTLTPHPEHAPYEGIIRAITSQKLSDAATNSIINKFCTQCSDNDEFPTPKQIMETDVETLHECGFSKLKSQEIHIVAEAALNKQIPSKSEIEKMSEEELMESLSKIKGVKRWTIEMYSIFTLGRLDIMPADDSTLKNEAKEFFGLSSKPQTEEVEKLTKPCKPYRTIAAWYLWQIPKLHRKGQ</sequence>
<keyword id="KW-0002">3D-structure</keyword>
<keyword id="KW-0227">DNA damage</keyword>
<keyword id="KW-0234">DNA repair</keyword>
<keyword id="KW-0539">Nucleus</keyword>
<keyword id="KW-1185">Reference proteome</keyword>
<gene>
    <name evidence="5" type="primary">mag2</name>
    <name type="ORF">SPBC23G7.11</name>
</gene>
<dbReference type="EMBL" id="CU329671">
    <property type="protein sequence ID" value="CAA22627.1"/>
    <property type="molecule type" value="Genomic_DNA"/>
</dbReference>
<dbReference type="PIR" id="T39957">
    <property type="entry name" value="T39957"/>
</dbReference>
<dbReference type="RefSeq" id="NP_595869.1">
    <property type="nucleotide sequence ID" value="NM_001021775.2"/>
</dbReference>
<dbReference type="PDB" id="4B21">
    <property type="method" value="X-ray"/>
    <property type="resolution" value="1.45 A"/>
    <property type="chains" value="A=1-213"/>
</dbReference>
<dbReference type="PDB" id="4B22">
    <property type="method" value="X-ray"/>
    <property type="resolution" value="1.90 A"/>
    <property type="chains" value="A=1-213"/>
</dbReference>
<dbReference type="PDB" id="4B23">
    <property type="method" value="X-ray"/>
    <property type="resolution" value="2.00 A"/>
    <property type="chains" value="A=1-213"/>
</dbReference>
<dbReference type="PDB" id="4B24">
    <property type="method" value="X-ray"/>
    <property type="resolution" value="2.30 A"/>
    <property type="chains" value="A=1-213"/>
</dbReference>
<dbReference type="PDB" id="4HSB">
    <property type="method" value="X-ray"/>
    <property type="resolution" value="1.90 A"/>
    <property type="chains" value="A=1-213"/>
</dbReference>
<dbReference type="PDBsum" id="4B21"/>
<dbReference type="PDBsum" id="4B22"/>
<dbReference type="PDBsum" id="4B23"/>
<dbReference type="PDBsum" id="4B24"/>
<dbReference type="PDBsum" id="4HSB"/>
<dbReference type="SMR" id="O94468"/>
<dbReference type="BioGRID" id="277171">
    <property type="interactions" value="5"/>
</dbReference>
<dbReference type="FunCoup" id="O94468">
    <property type="interactions" value="17"/>
</dbReference>
<dbReference type="STRING" id="284812.O94468"/>
<dbReference type="PaxDb" id="4896-SPBC23G7.11.1"/>
<dbReference type="EnsemblFungi" id="SPBC23G7.11.1">
    <property type="protein sequence ID" value="SPBC23G7.11.1:pep"/>
    <property type="gene ID" value="SPBC23G7.11"/>
</dbReference>
<dbReference type="GeneID" id="2540646"/>
<dbReference type="KEGG" id="spo:2540646"/>
<dbReference type="PomBase" id="SPBC23G7.11">
    <property type="gene designation" value="mag2"/>
</dbReference>
<dbReference type="VEuPathDB" id="FungiDB:SPBC23G7.11"/>
<dbReference type="eggNOG" id="KOG1918">
    <property type="taxonomic scope" value="Eukaryota"/>
</dbReference>
<dbReference type="HOGENOM" id="CLU_000445_72_5_1"/>
<dbReference type="InParanoid" id="O94468"/>
<dbReference type="OMA" id="YLLWHYY"/>
<dbReference type="PhylomeDB" id="O94468"/>
<dbReference type="EvolutionaryTrace" id="O94468"/>
<dbReference type="PRO" id="PR:O94468"/>
<dbReference type="Proteomes" id="UP000002485">
    <property type="component" value="Chromosome II"/>
</dbReference>
<dbReference type="GO" id="GO:0005634">
    <property type="term" value="C:nucleus"/>
    <property type="evidence" value="ECO:0000314"/>
    <property type="project" value="PomBase"/>
</dbReference>
<dbReference type="GO" id="GO:0032993">
    <property type="term" value="C:protein-DNA complex"/>
    <property type="evidence" value="ECO:0000318"/>
    <property type="project" value="GO_Central"/>
</dbReference>
<dbReference type="GO" id="GO:0032131">
    <property type="term" value="F:alkylated DNA binding"/>
    <property type="evidence" value="ECO:0000318"/>
    <property type="project" value="GO_Central"/>
</dbReference>
<dbReference type="GO" id="GO:0003824">
    <property type="term" value="F:catalytic activity"/>
    <property type="evidence" value="ECO:0007669"/>
    <property type="project" value="InterPro"/>
</dbReference>
<dbReference type="GO" id="GO:0003677">
    <property type="term" value="F:DNA binding"/>
    <property type="evidence" value="ECO:0000314"/>
    <property type="project" value="PomBase"/>
</dbReference>
<dbReference type="GO" id="GO:0140431">
    <property type="term" value="F:DNA-(abasic site) binding"/>
    <property type="evidence" value="ECO:0000314"/>
    <property type="project" value="PomBase"/>
</dbReference>
<dbReference type="GO" id="GO:0006285">
    <property type="term" value="P:base-excision repair, AP site formation"/>
    <property type="evidence" value="ECO:0000316"/>
    <property type="project" value="PomBase"/>
</dbReference>
<dbReference type="CDD" id="cd00056">
    <property type="entry name" value="ENDO3c"/>
    <property type="match status" value="1"/>
</dbReference>
<dbReference type="FunFam" id="1.10.340.30:FF:000004">
    <property type="entry name" value="DNA-3-methyladenine glycosylase II"/>
    <property type="match status" value="1"/>
</dbReference>
<dbReference type="Gene3D" id="1.10.1670.40">
    <property type="match status" value="1"/>
</dbReference>
<dbReference type="Gene3D" id="1.10.340.30">
    <property type="entry name" value="Hypothetical protein, domain 2"/>
    <property type="match status" value="1"/>
</dbReference>
<dbReference type="InterPro" id="IPR051912">
    <property type="entry name" value="Alkylbase_DNA_Glycosylase/TA"/>
</dbReference>
<dbReference type="InterPro" id="IPR000035">
    <property type="entry name" value="Alkylbase_DNA_glycsylse_CS"/>
</dbReference>
<dbReference type="InterPro" id="IPR011257">
    <property type="entry name" value="DNA_glycosylase"/>
</dbReference>
<dbReference type="InterPro" id="IPR003265">
    <property type="entry name" value="HhH-GPD_domain"/>
</dbReference>
<dbReference type="PANTHER" id="PTHR43003">
    <property type="entry name" value="DNA-3-METHYLADENINE GLYCOSYLASE"/>
    <property type="match status" value="1"/>
</dbReference>
<dbReference type="PANTHER" id="PTHR43003:SF5">
    <property type="entry name" value="DNA-3-METHYLADENINE GLYCOSYLASE"/>
    <property type="match status" value="1"/>
</dbReference>
<dbReference type="Pfam" id="PF00730">
    <property type="entry name" value="HhH-GPD"/>
    <property type="match status" value="1"/>
</dbReference>
<dbReference type="SMART" id="SM00478">
    <property type="entry name" value="ENDO3c"/>
    <property type="match status" value="1"/>
</dbReference>
<dbReference type="SUPFAM" id="SSF48150">
    <property type="entry name" value="DNA-glycosylase"/>
    <property type="match status" value="1"/>
</dbReference>
<dbReference type="PROSITE" id="PS00516">
    <property type="entry name" value="ALKYLBASE_DNA_GLYCOS"/>
    <property type="match status" value="1"/>
</dbReference>